<name>COBT_RHIEC</name>
<protein>
    <recommendedName>
        <fullName evidence="1">Nicotinate-nucleotide--dimethylbenzimidazole phosphoribosyltransferase</fullName>
        <shortName evidence="1">NN:DBI PRT</shortName>
        <ecNumber evidence="1">2.4.2.21</ecNumber>
    </recommendedName>
    <alternativeName>
        <fullName evidence="1">N(1)-alpha-phosphoribosyltransferase</fullName>
    </alternativeName>
</protein>
<sequence>MSVSGLPFDDFRTLLRELPGPDARALAAARERDAQLTKPPGALGRLEEIAFWLAAWTGRAPAVNRPLVAIFAGNHGVTRHGITPFPPAVTQQMVENFAAGGAAINQICVAHDLGLKVFDLALDYPTGDITEEAALSERDCAATMAFGMEAIAGGTDLLCIGEMGIGNTTIAAAINYALYGGSARDWVGPGTGSEGDMLERKIAAVEKAVALHSDHLDDPLEIMRRLGGREIAAMAGAILAARIERIPVLIDGYVATAAAAILKAANPAALDHCLIGHVSAEPGHLRSIEMLGKTPLLALGMRLGEGTGAALAAGIVKAAAACHSGMATFAQAGVSGKH</sequence>
<comment type="function">
    <text evidence="1">Catalyzes the synthesis of alpha-ribazole-5'-phosphate from nicotinate mononucleotide (NAMN) and 5,6-dimethylbenzimidazole (DMB).</text>
</comment>
<comment type="catalytic activity">
    <reaction evidence="1">
        <text>5,6-dimethylbenzimidazole + nicotinate beta-D-ribonucleotide = alpha-ribazole 5'-phosphate + nicotinate + H(+)</text>
        <dbReference type="Rhea" id="RHEA:11196"/>
        <dbReference type="ChEBI" id="CHEBI:15378"/>
        <dbReference type="ChEBI" id="CHEBI:15890"/>
        <dbReference type="ChEBI" id="CHEBI:32544"/>
        <dbReference type="ChEBI" id="CHEBI:57502"/>
        <dbReference type="ChEBI" id="CHEBI:57918"/>
        <dbReference type="EC" id="2.4.2.21"/>
    </reaction>
</comment>
<comment type="pathway">
    <text evidence="1">Nucleoside biosynthesis; alpha-ribazole biosynthesis; alpha-ribazole from 5,6-dimethylbenzimidazole: step 1/2.</text>
</comment>
<comment type="similarity">
    <text evidence="1">Belongs to the CobT family.</text>
</comment>
<organism>
    <name type="scientific">Rhizobium etli (strain ATCC 51251 / DSM 11541 / JCM 21823 / NBRC 15573 / CFN 42)</name>
    <dbReference type="NCBI Taxonomy" id="347834"/>
    <lineage>
        <taxon>Bacteria</taxon>
        <taxon>Pseudomonadati</taxon>
        <taxon>Pseudomonadota</taxon>
        <taxon>Alphaproteobacteria</taxon>
        <taxon>Hyphomicrobiales</taxon>
        <taxon>Rhizobiaceae</taxon>
        <taxon>Rhizobium/Agrobacterium group</taxon>
        <taxon>Rhizobium</taxon>
    </lineage>
</organism>
<evidence type="ECO:0000255" key="1">
    <source>
        <dbReference type="HAMAP-Rule" id="MF_00230"/>
    </source>
</evidence>
<dbReference type="EC" id="2.4.2.21" evidence="1"/>
<dbReference type="EMBL" id="CP000133">
    <property type="protein sequence ID" value="ABC91220.1"/>
    <property type="molecule type" value="Genomic_DNA"/>
</dbReference>
<dbReference type="RefSeq" id="WP_011425699.1">
    <property type="nucleotide sequence ID" value="NC_007761.1"/>
</dbReference>
<dbReference type="SMR" id="Q2K7G6"/>
<dbReference type="KEGG" id="ret:RHE_CH02443"/>
<dbReference type="eggNOG" id="COG2038">
    <property type="taxonomic scope" value="Bacteria"/>
</dbReference>
<dbReference type="HOGENOM" id="CLU_002982_0_1_5"/>
<dbReference type="OrthoDB" id="9781491at2"/>
<dbReference type="UniPathway" id="UPA00061">
    <property type="reaction ID" value="UER00516"/>
</dbReference>
<dbReference type="Proteomes" id="UP000001936">
    <property type="component" value="Chromosome"/>
</dbReference>
<dbReference type="GO" id="GO:0008939">
    <property type="term" value="F:nicotinate-nucleotide-dimethylbenzimidazole phosphoribosyltransferase activity"/>
    <property type="evidence" value="ECO:0007669"/>
    <property type="project" value="UniProtKB-UniRule"/>
</dbReference>
<dbReference type="GO" id="GO:0009236">
    <property type="term" value="P:cobalamin biosynthetic process"/>
    <property type="evidence" value="ECO:0007669"/>
    <property type="project" value="UniProtKB-KW"/>
</dbReference>
<dbReference type="CDD" id="cd02439">
    <property type="entry name" value="DMB-PRT_CobT"/>
    <property type="match status" value="1"/>
</dbReference>
<dbReference type="Gene3D" id="1.10.1610.10">
    <property type="match status" value="1"/>
</dbReference>
<dbReference type="Gene3D" id="3.40.50.10210">
    <property type="match status" value="1"/>
</dbReference>
<dbReference type="HAMAP" id="MF_00230">
    <property type="entry name" value="CobT"/>
    <property type="match status" value="1"/>
</dbReference>
<dbReference type="InterPro" id="IPR003200">
    <property type="entry name" value="Nict_dMeBzImd_PRibTrfase"/>
</dbReference>
<dbReference type="InterPro" id="IPR017846">
    <property type="entry name" value="Nict_dMeBzImd_PRibTrfase_bact"/>
</dbReference>
<dbReference type="InterPro" id="IPR023195">
    <property type="entry name" value="Nict_dMeBzImd_PRibTrfase_N"/>
</dbReference>
<dbReference type="InterPro" id="IPR036087">
    <property type="entry name" value="Nict_dMeBzImd_PRibTrfase_sf"/>
</dbReference>
<dbReference type="NCBIfam" id="TIGR03160">
    <property type="entry name" value="cobT_DBIPRT"/>
    <property type="match status" value="1"/>
</dbReference>
<dbReference type="NCBIfam" id="NF000996">
    <property type="entry name" value="PRK00105.1"/>
    <property type="match status" value="1"/>
</dbReference>
<dbReference type="PANTHER" id="PTHR43463">
    <property type="entry name" value="NICOTINATE-NUCLEOTIDE--DIMETHYLBENZIMIDAZOLE PHOSPHORIBOSYLTRANSFERASE"/>
    <property type="match status" value="1"/>
</dbReference>
<dbReference type="PANTHER" id="PTHR43463:SF1">
    <property type="entry name" value="NICOTINATE-NUCLEOTIDE--DIMETHYLBENZIMIDAZOLE PHOSPHORIBOSYLTRANSFERASE"/>
    <property type="match status" value="1"/>
</dbReference>
<dbReference type="Pfam" id="PF02277">
    <property type="entry name" value="DBI_PRT"/>
    <property type="match status" value="1"/>
</dbReference>
<dbReference type="SUPFAM" id="SSF52733">
    <property type="entry name" value="Nicotinate mononucleotide:5,6-dimethylbenzimidazole phosphoribosyltransferase (CobT)"/>
    <property type="match status" value="1"/>
</dbReference>
<accession>Q2K7G6</accession>
<keyword id="KW-0169">Cobalamin biosynthesis</keyword>
<keyword id="KW-0328">Glycosyltransferase</keyword>
<keyword id="KW-1185">Reference proteome</keyword>
<keyword id="KW-0808">Transferase</keyword>
<proteinExistence type="inferred from homology"/>
<gene>
    <name evidence="1" type="primary">cobT</name>
    <name type="ordered locus">RHE_CH02443</name>
</gene>
<feature type="chain" id="PRO_1000021620" description="Nicotinate-nucleotide--dimethylbenzimidazole phosphoribosyltransferase">
    <location>
        <begin position="1"/>
        <end position="338"/>
    </location>
</feature>
<feature type="active site" description="Proton acceptor" evidence="1">
    <location>
        <position position="305"/>
    </location>
</feature>
<reference key="1">
    <citation type="journal article" date="2006" name="Proc. Natl. Acad. Sci. U.S.A.">
        <title>The partitioned Rhizobium etli genome: genetic and metabolic redundancy in seven interacting replicons.</title>
        <authorList>
            <person name="Gonzalez V."/>
            <person name="Santamaria R.I."/>
            <person name="Bustos P."/>
            <person name="Hernandez-Gonzalez I."/>
            <person name="Medrano-Soto A."/>
            <person name="Moreno-Hagelsieb G."/>
            <person name="Janga S.C."/>
            <person name="Ramirez M.A."/>
            <person name="Jimenez-Jacinto V."/>
            <person name="Collado-Vides J."/>
            <person name="Davila G."/>
        </authorList>
    </citation>
    <scope>NUCLEOTIDE SEQUENCE [LARGE SCALE GENOMIC DNA]</scope>
    <source>
        <strain>ATCC 51251 / DSM 11541 / JCM 21823 / NBRC 15573 / CFN 42</strain>
    </source>
</reference>